<feature type="chain" id="PRO_0000133495" description="Major capsid protein L1">
    <location>
        <begin position="1"/>
        <end position="501"/>
    </location>
</feature>
<feature type="region of interest" description="Disordered" evidence="2">
    <location>
        <begin position="472"/>
        <end position="501"/>
    </location>
</feature>
<feature type="compositionally biased region" description="Basic residues" evidence="2">
    <location>
        <begin position="492"/>
        <end position="501"/>
    </location>
</feature>
<feature type="disulfide bond" description="Interchain (with C-424)" evidence="1">
    <location>
        <position position="172"/>
    </location>
</feature>
<feature type="disulfide bond" description="Interchain (with C-172)" evidence="1">
    <location>
        <position position="424"/>
    </location>
</feature>
<feature type="helix" evidence="3">
    <location>
        <begin position="23"/>
        <end position="25"/>
    </location>
</feature>
<feature type="strand" evidence="3">
    <location>
        <begin position="28"/>
        <end position="37"/>
    </location>
</feature>
<feature type="strand" evidence="3">
    <location>
        <begin position="41"/>
        <end position="49"/>
    </location>
</feature>
<feature type="strand" evidence="3">
    <location>
        <begin position="54"/>
        <end position="59"/>
    </location>
</feature>
<feature type="strand" evidence="3">
    <location>
        <begin position="68"/>
        <end position="73"/>
    </location>
</feature>
<feature type="turn" evidence="3">
    <location>
        <begin position="77"/>
        <end position="79"/>
    </location>
</feature>
<feature type="turn" evidence="3">
    <location>
        <begin position="90"/>
        <end position="92"/>
    </location>
</feature>
<feature type="strand" evidence="3">
    <location>
        <begin position="93"/>
        <end position="106"/>
    </location>
</feature>
<feature type="strand" evidence="3">
    <location>
        <begin position="114"/>
        <end position="120"/>
    </location>
</feature>
<feature type="strand" evidence="3">
    <location>
        <begin position="142"/>
        <end position="147"/>
    </location>
</feature>
<feature type="strand" evidence="3">
    <location>
        <begin position="150"/>
        <end position="159"/>
    </location>
</feature>
<feature type="strand" evidence="3">
    <location>
        <begin position="162"/>
        <end position="168"/>
    </location>
</feature>
<feature type="strand" evidence="3">
    <location>
        <begin position="185"/>
        <end position="191"/>
    </location>
</feature>
<feature type="strand" evidence="3">
    <location>
        <begin position="204"/>
        <end position="206"/>
    </location>
</feature>
<feature type="helix" evidence="3">
    <location>
        <begin position="207"/>
        <end position="210"/>
    </location>
</feature>
<feature type="turn" evidence="3">
    <location>
        <begin position="219"/>
        <end position="223"/>
    </location>
</feature>
<feature type="strand" evidence="3">
    <location>
        <begin position="224"/>
        <end position="229"/>
    </location>
</feature>
<feature type="helix" evidence="3">
    <location>
        <begin position="231"/>
        <end position="235"/>
    </location>
</feature>
<feature type="strand" evidence="3">
    <location>
        <begin position="244"/>
        <end position="259"/>
    </location>
</feature>
<feature type="strand" evidence="3">
    <location>
        <begin position="262"/>
        <end position="266"/>
    </location>
</feature>
<feature type="helix" evidence="3">
    <location>
        <begin position="270"/>
        <end position="272"/>
    </location>
</feature>
<feature type="helix" evidence="3">
    <location>
        <begin position="278"/>
        <end position="281"/>
    </location>
</feature>
<feature type="strand" evidence="3">
    <location>
        <begin position="288"/>
        <end position="293"/>
    </location>
</feature>
<feature type="helix" evidence="3">
    <location>
        <begin position="299"/>
        <end position="301"/>
    </location>
</feature>
<feature type="strand" evidence="3">
    <location>
        <begin position="304"/>
        <end position="306"/>
    </location>
</feature>
<feature type="strand" evidence="3">
    <location>
        <begin position="314"/>
        <end position="316"/>
    </location>
</feature>
<feature type="helix" evidence="3">
    <location>
        <begin position="322"/>
        <end position="324"/>
    </location>
</feature>
<feature type="strand" evidence="3">
    <location>
        <begin position="327"/>
        <end position="332"/>
    </location>
</feature>
<feature type="strand" evidence="3">
    <location>
        <begin position="339"/>
        <end position="345"/>
    </location>
</feature>
<feature type="strand" evidence="3">
    <location>
        <begin position="349"/>
        <end position="351"/>
    </location>
</feature>
<feature type="helix" evidence="3">
    <location>
        <begin position="353"/>
        <end position="355"/>
    </location>
</feature>
<feature type="strand" evidence="3">
    <location>
        <begin position="356"/>
        <end position="378"/>
    </location>
</feature>
<feature type="helix" evidence="3">
    <location>
        <begin position="381"/>
        <end position="390"/>
    </location>
</feature>
<feature type="helix" evidence="3">
    <location>
        <begin position="392"/>
        <end position="397"/>
    </location>
</feature>
<feature type="strand" evidence="3">
    <location>
        <begin position="438"/>
        <end position="440"/>
    </location>
</feature>
<feature type="strand" evidence="3">
    <location>
        <begin position="443"/>
        <end position="446"/>
    </location>
</feature>
<feature type="helix" evidence="3">
    <location>
        <begin position="448"/>
        <end position="450"/>
    </location>
</feature>
<feature type="helix" evidence="3">
    <location>
        <begin position="455"/>
        <end position="457"/>
    </location>
</feature>
<feature type="helix" evidence="3">
    <location>
        <begin position="459"/>
        <end position="467"/>
    </location>
</feature>
<name>VL1_HPV11</name>
<dbReference type="EMBL" id="M14119">
    <property type="protein sequence ID" value="AAA46935.1"/>
    <property type="molecule type" value="Genomic_DNA"/>
</dbReference>
<dbReference type="PIR" id="A03639">
    <property type="entry name" value="P1WL11"/>
</dbReference>
<dbReference type="PDB" id="2R5K">
    <property type="method" value="X-ray"/>
    <property type="resolution" value="3.20 A"/>
    <property type="chains" value="A/B/C/D/E=20-399, A/B/C/D/E=433-470"/>
</dbReference>
<dbReference type="PDB" id="8YEG">
    <property type="method" value="EM"/>
    <property type="resolution" value="3.10 A"/>
    <property type="chains" value="B/C/D/E/F=20-470"/>
</dbReference>
<dbReference type="PDBsum" id="2R5K"/>
<dbReference type="PDBsum" id="8YEG"/>
<dbReference type="EMDB" id="EMD-39194"/>
<dbReference type="SMR" id="P04012"/>
<dbReference type="MINT" id="P04012"/>
<dbReference type="EvolutionaryTrace" id="P04012"/>
<dbReference type="Proteomes" id="UP000008222">
    <property type="component" value="Genome"/>
</dbReference>
<dbReference type="GO" id="GO:0042025">
    <property type="term" value="C:host cell nucleus"/>
    <property type="evidence" value="ECO:0007669"/>
    <property type="project" value="UniProtKB-SubCell"/>
</dbReference>
<dbReference type="GO" id="GO:0039620">
    <property type="term" value="C:T=7 icosahedral viral capsid"/>
    <property type="evidence" value="ECO:0007669"/>
    <property type="project" value="UniProtKB-UniRule"/>
</dbReference>
<dbReference type="GO" id="GO:0005198">
    <property type="term" value="F:structural molecule activity"/>
    <property type="evidence" value="ECO:0007669"/>
    <property type="project" value="UniProtKB-UniRule"/>
</dbReference>
<dbReference type="GO" id="GO:0075509">
    <property type="term" value="P:endocytosis involved in viral entry into host cell"/>
    <property type="evidence" value="ECO:0007669"/>
    <property type="project" value="UniProtKB-KW"/>
</dbReference>
<dbReference type="GO" id="GO:0019062">
    <property type="term" value="P:virion attachment to host cell"/>
    <property type="evidence" value="ECO:0007669"/>
    <property type="project" value="UniProtKB-UniRule"/>
</dbReference>
<dbReference type="Gene3D" id="2.60.175.20">
    <property type="entry name" value="Major capsid L1 (late) superfamily, Papillomavirus"/>
    <property type="match status" value="2"/>
</dbReference>
<dbReference type="HAMAP" id="MF_04002">
    <property type="entry name" value="PPV_L1"/>
    <property type="match status" value="1"/>
</dbReference>
<dbReference type="InterPro" id="IPR002210">
    <property type="entry name" value="Capsid_L1_Papillomavir"/>
</dbReference>
<dbReference type="InterPro" id="IPR036973">
    <property type="entry name" value="Capsid_L1_sf_Papillomavir"/>
</dbReference>
<dbReference type="InterPro" id="IPR011222">
    <property type="entry name" value="dsDNA_vir_gr_I_capsid"/>
</dbReference>
<dbReference type="Pfam" id="PF00500">
    <property type="entry name" value="Late_protein_L1"/>
    <property type="match status" value="1"/>
</dbReference>
<dbReference type="PRINTS" id="PR00865">
    <property type="entry name" value="HPVCAPSIDL1"/>
</dbReference>
<dbReference type="SUPFAM" id="SSF88648">
    <property type="entry name" value="Group I dsDNA viruses"/>
    <property type="match status" value="1"/>
</dbReference>
<accession>P04012</accession>
<protein>
    <recommendedName>
        <fullName evidence="1">Major capsid protein L1</fullName>
    </recommendedName>
</protein>
<comment type="function">
    <text evidence="1">Forms an icosahedral capsid with a T=7 symmetry and a 50 nm diameter. The capsid is composed of 72 pentamers linked to each other by disulfide bonds and associated with L2 proteins. Binds to heparan sulfate proteoglycans on cell surface of basal layer keratinocytes to provide initial virion attachment. This binding mediates a conformational change in the virus capsid that facilitates efficient infection. The virion enters the host cell via endocytosis. During virus trafficking, L1 protein dissociates from the viral DNA and the genomic DNA is released to the host nucleus. The virion assembly takes place within the cell nucleus. Encapsulates the genomic DNA together with protein L2.</text>
</comment>
<comment type="subunit">
    <text evidence="1">Self-assembles into homopentamers. The capsid has an icosahedral symmetry and consists of 72 capsomers, with each capsomer being a pentamer of L1. Interacts with the minor capsid protein L2; this interaction is necessary for viral genome encapsidation. Interacts with protein E2; this interaction enhances E2-dependent replication and transcription activation.</text>
</comment>
<comment type="subcellular location">
    <subcellularLocation>
        <location evidence="1">Virion</location>
    </subcellularLocation>
    <subcellularLocation>
        <location evidence="1">Host nucleus</location>
    </subcellularLocation>
</comment>
<comment type="similarity">
    <text evidence="1">Belongs to the papillomaviridae L1 protein family.</text>
</comment>
<organismHost>
    <name type="scientific">Homo sapiens</name>
    <name type="common">Human</name>
    <dbReference type="NCBI Taxonomy" id="9606"/>
</organismHost>
<organism>
    <name type="scientific">Human papillomavirus 11</name>
    <dbReference type="NCBI Taxonomy" id="10580"/>
    <lineage>
        <taxon>Viruses</taxon>
        <taxon>Monodnaviria</taxon>
        <taxon>Shotokuvirae</taxon>
        <taxon>Cossaviricota</taxon>
        <taxon>Papovaviricetes</taxon>
        <taxon>Zurhausenvirales</taxon>
        <taxon>Papillomaviridae</taxon>
        <taxon>Firstpapillomavirinae</taxon>
        <taxon>Alphapapillomavirus</taxon>
        <taxon>Alphapapillomavirus 10</taxon>
    </lineage>
</organism>
<evidence type="ECO:0000255" key="1">
    <source>
        <dbReference type="HAMAP-Rule" id="MF_04002"/>
    </source>
</evidence>
<evidence type="ECO:0000256" key="2">
    <source>
        <dbReference type="SAM" id="MobiDB-lite"/>
    </source>
</evidence>
<evidence type="ECO:0007829" key="3">
    <source>
        <dbReference type="PDB" id="2R5K"/>
    </source>
</evidence>
<sequence>MWRPSDSTVYVPPPNPVSKVVATDAYVKRTNIFYHASSSRLLAVGHPYYSIKKVNKTVVPKVSGYQYRVFKVVLPDPNKFALPDSSLFDPTTQRLVWACTGLEVGRGQPLGVGVSGHPLLNKYDDVENSGGYGGNPGQDNRVNVGMDYKQTQLCMVGCAPPLGEHWGKGTQCSNTSVQNGDCPPLELITSVIQDGDMVDTGFGAMNFADLQTNKSDVPLDICGTVCKYPDYLQMAADPYGDRLFFYLRKEQMFARHFFNRAGTVGEPVPDDLLVKGGNNRSSVASSIYVHTPSGSLVSSEAQLFNKPYWLQKAQGHNNGICWGNHLFVTVVDTTRSTNMTLCASVSKSATYTNSDYKEYMRHVEEFDLQFIFQLCSITLSAEVMAYIHTMNPSVLEDWNFGLSPPPNGTLEDTYRYVQSQAITCQKPTPEKEKQDPYKDMSFWEVNLKEKFSSELDQFPLGRKFLLQSGYRGRTSARTGIKRPAVSKPSTAPKRKRTKTKK</sequence>
<reference key="1">
    <citation type="journal article" date="1986" name="Virology">
        <title>The nucleotide sequence and genome organization of human papilloma virus type 11.</title>
        <authorList>
            <person name="Dartmann K."/>
            <person name="Schwarz E."/>
            <person name="Gissmann L."/>
            <person name="zur Hausen H."/>
        </authorList>
    </citation>
    <scope>NUCLEOTIDE SEQUENCE [GENOMIC DNA]</scope>
</reference>
<reference key="2">
    <citation type="journal article" date="2007" name="J. Biol. Chem.">
        <title>Crystal structures of four types of human papillomavirus L1 capsid proteins: understanding the specificity of neutralizing monoclonal antibodies.</title>
        <authorList>
            <person name="Bishop B."/>
            <person name="Dasgupta J."/>
            <person name="Klein M."/>
            <person name="Garcea R.L."/>
            <person name="Christensen N.D."/>
            <person name="Zhao R."/>
            <person name="Chen X.S."/>
        </authorList>
    </citation>
    <scope>X-RAY CRYSTALLOGRAPHY (3.2 ANGSTROMS) OF 20-470</scope>
</reference>
<gene>
    <name evidence="1" type="primary">L1</name>
</gene>
<proteinExistence type="evidence at protein level"/>
<keyword id="KW-0002">3D-structure</keyword>
<keyword id="KW-0167">Capsid protein</keyword>
<keyword id="KW-1015">Disulfide bond</keyword>
<keyword id="KW-1048">Host nucleus</keyword>
<keyword id="KW-0945">Host-virus interaction</keyword>
<keyword id="KW-0426">Late protein</keyword>
<keyword id="KW-1185">Reference proteome</keyword>
<keyword id="KW-1145">T=7 icosahedral capsid protein</keyword>
<keyword id="KW-1161">Viral attachment to host cell</keyword>
<keyword id="KW-1162">Viral penetration into host cytoplasm</keyword>
<keyword id="KW-0946">Virion</keyword>
<keyword id="KW-1164">Virus endocytosis by host</keyword>
<keyword id="KW-1160">Virus entry into host cell</keyword>